<sequence>MKDIILIYMICAPISMIGSLFIIITWLLYAKLKNSGSNFIFFQAISDFFFTSKYIITIIFYYINIPQFSDETSSTDTNPYCFSLGLFSQFFGQATIMWSYTMTVKVFHSYFEMKKKNNNNNIGSNNIGGGGGGNNSNKQNSIDKTLKWYHLFVWGFCLVNATIIGISKQYGPSSTGCWIVGANNPYRFFELVPLYFTITTSIIILILILVKMKKSKPSSLLPTESMRYNQQAREFKIQLMKFVLIFIIFWLPATVLRTLEYFGIEKTFFILLDAVSVSLQALANSLVWATSPQFLKLMKRKVVNKPNKQMEREYLINK</sequence>
<organism>
    <name type="scientific">Dictyostelium discoideum</name>
    <name type="common">Social amoeba</name>
    <dbReference type="NCBI Taxonomy" id="44689"/>
    <lineage>
        <taxon>Eukaryota</taxon>
        <taxon>Amoebozoa</taxon>
        <taxon>Evosea</taxon>
        <taxon>Eumycetozoa</taxon>
        <taxon>Dictyostelia</taxon>
        <taxon>Dictyosteliales</taxon>
        <taxon>Dictyosteliaceae</taxon>
        <taxon>Dictyostelium</taxon>
    </lineage>
</organism>
<reference key="1">
    <citation type="journal article" date="2005" name="Nature">
        <title>The genome of the social amoeba Dictyostelium discoideum.</title>
        <authorList>
            <person name="Eichinger L."/>
            <person name="Pachebat J.A."/>
            <person name="Gloeckner G."/>
            <person name="Rajandream M.A."/>
            <person name="Sucgang R."/>
            <person name="Berriman M."/>
            <person name="Song J."/>
            <person name="Olsen R."/>
            <person name="Szafranski K."/>
            <person name="Xu Q."/>
            <person name="Tunggal B."/>
            <person name="Kummerfeld S."/>
            <person name="Madera M."/>
            <person name="Konfortov B.A."/>
            <person name="Rivero F."/>
            <person name="Bankier A.T."/>
            <person name="Lehmann R."/>
            <person name="Hamlin N."/>
            <person name="Davies R."/>
            <person name="Gaudet P."/>
            <person name="Fey P."/>
            <person name="Pilcher K."/>
            <person name="Chen G."/>
            <person name="Saunders D."/>
            <person name="Sodergren E.J."/>
            <person name="Davis P."/>
            <person name="Kerhornou A."/>
            <person name="Nie X."/>
            <person name="Hall N."/>
            <person name="Anjard C."/>
            <person name="Hemphill L."/>
            <person name="Bason N."/>
            <person name="Farbrother P."/>
            <person name="Desany B."/>
            <person name="Just E."/>
            <person name="Morio T."/>
            <person name="Rost R."/>
            <person name="Churcher C.M."/>
            <person name="Cooper J."/>
            <person name="Haydock S."/>
            <person name="van Driessche N."/>
            <person name="Cronin A."/>
            <person name="Goodhead I."/>
            <person name="Muzny D.M."/>
            <person name="Mourier T."/>
            <person name="Pain A."/>
            <person name="Lu M."/>
            <person name="Harper D."/>
            <person name="Lindsay R."/>
            <person name="Hauser H."/>
            <person name="James K.D."/>
            <person name="Quiles M."/>
            <person name="Madan Babu M."/>
            <person name="Saito T."/>
            <person name="Buchrieser C."/>
            <person name="Wardroper A."/>
            <person name="Felder M."/>
            <person name="Thangavelu M."/>
            <person name="Johnson D."/>
            <person name="Knights A."/>
            <person name="Loulseged H."/>
            <person name="Mungall K.L."/>
            <person name="Oliver K."/>
            <person name="Price C."/>
            <person name="Quail M.A."/>
            <person name="Urushihara H."/>
            <person name="Hernandez J."/>
            <person name="Rabbinowitsch E."/>
            <person name="Steffen D."/>
            <person name="Sanders M."/>
            <person name="Ma J."/>
            <person name="Kohara Y."/>
            <person name="Sharp S."/>
            <person name="Simmonds M.N."/>
            <person name="Spiegler S."/>
            <person name="Tivey A."/>
            <person name="Sugano S."/>
            <person name="White B."/>
            <person name="Walker D."/>
            <person name="Woodward J.R."/>
            <person name="Winckler T."/>
            <person name="Tanaka Y."/>
            <person name="Shaulsky G."/>
            <person name="Schleicher M."/>
            <person name="Weinstock G.M."/>
            <person name="Rosenthal A."/>
            <person name="Cox E.C."/>
            <person name="Chisholm R.L."/>
            <person name="Gibbs R.A."/>
            <person name="Loomis W.F."/>
            <person name="Platzer M."/>
            <person name="Kay R.R."/>
            <person name="Williams J.G."/>
            <person name="Dear P.H."/>
            <person name="Noegel A.A."/>
            <person name="Barrell B.G."/>
            <person name="Kuspa A."/>
        </authorList>
    </citation>
    <scope>NUCLEOTIDE SEQUENCE [LARGE SCALE GENOMIC DNA]</scope>
    <source>
        <strain>AX4</strain>
    </source>
</reference>
<reference key="2">
    <citation type="journal article" date="2006" name="Eur. J. Cell Biol.">
        <title>The Dictyostelium repertoire of seven transmembrane domain receptors.</title>
        <authorList>
            <person name="Prabhu Y."/>
            <person name="Eichinger L."/>
        </authorList>
    </citation>
    <scope>NOMENCLATURE</scope>
</reference>
<feature type="chain" id="PRO_0000371352" description="Cyclic AMP receptor-like protein F">
    <location>
        <begin position="1"/>
        <end position="318"/>
    </location>
</feature>
<feature type="topological domain" description="Extracellular" evidence="2">
    <location>
        <begin position="1"/>
        <end position="3"/>
    </location>
</feature>
<feature type="transmembrane region" description="Helical; Name=1" evidence="2">
    <location>
        <begin position="4"/>
        <end position="24"/>
    </location>
</feature>
<feature type="topological domain" description="Cytoplasmic" evidence="2">
    <location>
        <begin position="25"/>
        <end position="38"/>
    </location>
</feature>
<feature type="transmembrane region" description="Helical; Name=2" evidence="2">
    <location>
        <begin position="39"/>
        <end position="59"/>
    </location>
</feature>
<feature type="topological domain" description="Extracellular" evidence="2">
    <location>
        <begin position="60"/>
        <end position="83"/>
    </location>
</feature>
<feature type="transmembrane region" description="Helical; Name=3" evidence="2">
    <location>
        <begin position="84"/>
        <end position="104"/>
    </location>
</feature>
<feature type="topological domain" description="Cytoplasmic" evidence="2">
    <location>
        <begin position="105"/>
        <end position="145"/>
    </location>
</feature>
<feature type="transmembrane region" description="Helical; Name=4" evidence="2">
    <location>
        <begin position="146"/>
        <end position="166"/>
    </location>
</feature>
<feature type="topological domain" description="Extracellular" evidence="2">
    <location>
        <begin position="167"/>
        <end position="187"/>
    </location>
</feature>
<feature type="transmembrane region" description="Helical; Name=5" evidence="2">
    <location>
        <begin position="188"/>
        <end position="208"/>
    </location>
</feature>
<feature type="topological domain" description="Cytoplasmic" evidence="2">
    <location>
        <begin position="209"/>
        <end position="234"/>
    </location>
</feature>
<feature type="transmembrane region" description="Helical; Name=6" evidence="2">
    <location>
        <begin position="235"/>
        <end position="255"/>
    </location>
</feature>
<feature type="topological domain" description="Extracellular" evidence="2">
    <location>
        <begin position="256"/>
        <end position="267"/>
    </location>
</feature>
<feature type="transmembrane region" description="Helical; Name=7" evidence="2">
    <location>
        <begin position="268"/>
        <end position="288"/>
    </location>
</feature>
<feature type="topological domain" description="Cytoplasmic" evidence="2">
    <location>
        <begin position="289"/>
        <end position="318"/>
    </location>
</feature>
<feature type="disulfide bond" evidence="1">
    <location>
        <begin position="81"/>
        <end position="177"/>
    </location>
</feature>
<proteinExistence type="inferred from homology"/>
<dbReference type="EMBL" id="AAFI02000158">
    <property type="protein sequence ID" value="EAL62364.1"/>
    <property type="molecule type" value="Genomic_DNA"/>
</dbReference>
<dbReference type="RefSeq" id="XP_635867.1">
    <property type="nucleotide sequence ID" value="XM_630775.1"/>
</dbReference>
<dbReference type="FunCoup" id="Q54GG1">
    <property type="interactions" value="36"/>
</dbReference>
<dbReference type="PaxDb" id="44689-DDB0231827"/>
<dbReference type="EnsemblProtists" id="EAL62364">
    <property type="protein sequence ID" value="EAL62364"/>
    <property type="gene ID" value="DDB_G0290185"/>
</dbReference>
<dbReference type="GeneID" id="8627523"/>
<dbReference type="KEGG" id="ddi:DDB_G0290185"/>
<dbReference type="dictyBase" id="DDB_G0290185">
    <property type="gene designation" value="crlF"/>
</dbReference>
<dbReference type="VEuPathDB" id="AmoebaDB:DDB_G0290185"/>
<dbReference type="eggNOG" id="ENOG502SGTH">
    <property type="taxonomic scope" value="Eukaryota"/>
</dbReference>
<dbReference type="HOGENOM" id="CLU_875580_0_0_1"/>
<dbReference type="InParanoid" id="Q54GG1"/>
<dbReference type="OMA" id="YHLFVWG"/>
<dbReference type="PRO" id="PR:Q54GG1"/>
<dbReference type="Proteomes" id="UP000002195">
    <property type="component" value="Chromosome 5"/>
</dbReference>
<dbReference type="GO" id="GO:0005886">
    <property type="term" value="C:plasma membrane"/>
    <property type="evidence" value="ECO:0000318"/>
    <property type="project" value="GO_Central"/>
</dbReference>
<dbReference type="GO" id="GO:0004930">
    <property type="term" value="F:G protein-coupled receptor activity"/>
    <property type="evidence" value="ECO:0000318"/>
    <property type="project" value="GO_Central"/>
</dbReference>
<dbReference type="GO" id="GO:0007189">
    <property type="term" value="P:adenylate cyclase-activating G protein-coupled receptor signaling pathway"/>
    <property type="evidence" value="ECO:0000318"/>
    <property type="project" value="GO_Central"/>
</dbReference>
<dbReference type="GO" id="GO:0007166">
    <property type="term" value="P:cell surface receptor signaling pathway"/>
    <property type="evidence" value="ECO:0007669"/>
    <property type="project" value="InterPro"/>
</dbReference>
<dbReference type="Gene3D" id="1.20.1070.10">
    <property type="entry name" value="Rhodopsin 7-helix transmembrane proteins"/>
    <property type="match status" value="1"/>
</dbReference>
<dbReference type="InterPro" id="IPR022343">
    <property type="entry name" value="GCR1-cAMP_receptor"/>
</dbReference>
<dbReference type="InterPro" id="IPR017981">
    <property type="entry name" value="GPCR_2-like_7TM"/>
</dbReference>
<dbReference type="InterPro" id="IPR017452">
    <property type="entry name" value="GPCR_Rhodpsn_7TM"/>
</dbReference>
<dbReference type="PANTHER" id="PTHR23112:SF9">
    <property type="entry name" value="CYCLIC AMP RECEPTOR-LIKE PROTEIN F"/>
    <property type="match status" value="1"/>
</dbReference>
<dbReference type="PANTHER" id="PTHR23112">
    <property type="entry name" value="G PROTEIN-COUPLED RECEPTOR 157-RELATED"/>
    <property type="match status" value="1"/>
</dbReference>
<dbReference type="Pfam" id="PF05462">
    <property type="entry name" value="Dicty_CAR"/>
    <property type="match status" value="1"/>
</dbReference>
<dbReference type="PRINTS" id="PR02001">
    <property type="entry name" value="GCR1CAMPR"/>
</dbReference>
<dbReference type="SUPFAM" id="SSF81321">
    <property type="entry name" value="Family A G protein-coupled receptor-like"/>
    <property type="match status" value="1"/>
</dbReference>
<dbReference type="PROSITE" id="PS50261">
    <property type="entry name" value="G_PROTEIN_RECEP_F2_4"/>
    <property type="match status" value="1"/>
</dbReference>
<evidence type="ECO:0000250" key="1"/>
<evidence type="ECO:0000255" key="2"/>
<evidence type="ECO:0000305" key="3"/>
<protein>
    <recommendedName>
        <fullName>Cyclic AMP receptor-like protein F</fullName>
    </recommendedName>
</protein>
<comment type="function">
    <text evidence="1">Receptor for cAMP.</text>
</comment>
<comment type="subcellular location">
    <subcellularLocation>
        <location evidence="3">Membrane</location>
        <topology evidence="3">Multi-pass membrane protein</topology>
    </subcellularLocation>
</comment>
<comment type="similarity">
    <text evidence="3">Belongs to the G-protein coupled receptor 5 family.</text>
</comment>
<gene>
    <name type="primary">crlF</name>
    <name type="ORF">DDB_G0290185</name>
</gene>
<name>CRLF_DICDI</name>
<accession>Q54GG1</accession>
<keyword id="KW-1015">Disulfide bond</keyword>
<keyword id="KW-0297">G-protein coupled receptor</keyword>
<keyword id="KW-0472">Membrane</keyword>
<keyword id="KW-0675">Receptor</keyword>
<keyword id="KW-1185">Reference proteome</keyword>
<keyword id="KW-0807">Transducer</keyword>
<keyword id="KW-0812">Transmembrane</keyword>
<keyword id="KW-1133">Transmembrane helix</keyword>